<comment type="function">
    <text evidence="1">Plays a role in the regulation of centrosome and Golgi apparatus positioning, with consequences on cell shape and cell migration.</text>
</comment>
<comment type="subcellular location">
    <subcellularLocation>
        <location evidence="1">Cytoplasm</location>
        <location evidence="1">Cytoskeleton</location>
        <location evidence="1">Microtubule organizing center</location>
        <location evidence="1">Centrosome</location>
    </subcellularLocation>
    <subcellularLocation>
        <location evidence="1">Cytoplasm</location>
        <location evidence="1">Cytoskeleton</location>
        <location evidence="1">Spindle pole</location>
    </subcellularLocation>
    <text evidence="1">Localizes at the spindle midzone, midbody and basal bodies of primary and motile cilia.</text>
</comment>
<comment type="alternative products">
    <event type="alternative splicing"/>
    <isoform>
        <id>Q640P7-1</id>
        <name>1</name>
        <sequence type="displayed"/>
    </isoform>
    <isoform>
        <id>Q640P7-2</id>
        <name>2</name>
        <sequence type="described" ref="VSP_028139 VSP_028140"/>
    </isoform>
</comment>
<comment type="tissue specificity">
    <text evidence="3">Expressed in brain and testis (at protein level).</text>
</comment>
<comment type="similarity">
    <text evidence="5">Belongs to the TBCC family.</text>
</comment>
<comment type="sequence caution" evidence="5">
    <conflict type="frameshift">
        <sequence resource="EMBL-CDS" id="BAC30476"/>
    </conflict>
</comment>
<reference key="1">
    <citation type="journal article" date="2005" name="Science">
        <title>The transcriptional landscape of the mammalian genome.</title>
        <authorList>
            <person name="Carninci P."/>
            <person name="Kasukawa T."/>
            <person name="Katayama S."/>
            <person name="Gough J."/>
            <person name="Frith M.C."/>
            <person name="Maeda N."/>
            <person name="Oyama R."/>
            <person name="Ravasi T."/>
            <person name="Lenhard B."/>
            <person name="Wells C."/>
            <person name="Kodzius R."/>
            <person name="Shimokawa K."/>
            <person name="Bajic V.B."/>
            <person name="Brenner S.E."/>
            <person name="Batalov S."/>
            <person name="Forrest A.R."/>
            <person name="Zavolan M."/>
            <person name="Davis M.J."/>
            <person name="Wilming L.G."/>
            <person name="Aidinis V."/>
            <person name="Allen J.E."/>
            <person name="Ambesi-Impiombato A."/>
            <person name="Apweiler R."/>
            <person name="Aturaliya R.N."/>
            <person name="Bailey T.L."/>
            <person name="Bansal M."/>
            <person name="Baxter L."/>
            <person name="Beisel K.W."/>
            <person name="Bersano T."/>
            <person name="Bono H."/>
            <person name="Chalk A.M."/>
            <person name="Chiu K.P."/>
            <person name="Choudhary V."/>
            <person name="Christoffels A."/>
            <person name="Clutterbuck D.R."/>
            <person name="Crowe M.L."/>
            <person name="Dalla E."/>
            <person name="Dalrymple B.P."/>
            <person name="de Bono B."/>
            <person name="Della Gatta G."/>
            <person name="di Bernardo D."/>
            <person name="Down T."/>
            <person name="Engstrom P."/>
            <person name="Fagiolini M."/>
            <person name="Faulkner G."/>
            <person name="Fletcher C.F."/>
            <person name="Fukushima T."/>
            <person name="Furuno M."/>
            <person name="Futaki S."/>
            <person name="Gariboldi M."/>
            <person name="Georgii-Hemming P."/>
            <person name="Gingeras T.R."/>
            <person name="Gojobori T."/>
            <person name="Green R.E."/>
            <person name="Gustincich S."/>
            <person name="Harbers M."/>
            <person name="Hayashi Y."/>
            <person name="Hensch T.K."/>
            <person name="Hirokawa N."/>
            <person name="Hill D."/>
            <person name="Huminiecki L."/>
            <person name="Iacono M."/>
            <person name="Ikeo K."/>
            <person name="Iwama A."/>
            <person name="Ishikawa T."/>
            <person name="Jakt M."/>
            <person name="Kanapin A."/>
            <person name="Katoh M."/>
            <person name="Kawasawa Y."/>
            <person name="Kelso J."/>
            <person name="Kitamura H."/>
            <person name="Kitano H."/>
            <person name="Kollias G."/>
            <person name="Krishnan S.P."/>
            <person name="Kruger A."/>
            <person name="Kummerfeld S.K."/>
            <person name="Kurochkin I.V."/>
            <person name="Lareau L.F."/>
            <person name="Lazarevic D."/>
            <person name="Lipovich L."/>
            <person name="Liu J."/>
            <person name="Liuni S."/>
            <person name="McWilliam S."/>
            <person name="Madan Babu M."/>
            <person name="Madera M."/>
            <person name="Marchionni L."/>
            <person name="Matsuda H."/>
            <person name="Matsuzawa S."/>
            <person name="Miki H."/>
            <person name="Mignone F."/>
            <person name="Miyake S."/>
            <person name="Morris K."/>
            <person name="Mottagui-Tabar S."/>
            <person name="Mulder N."/>
            <person name="Nakano N."/>
            <person name="Nakauchi H."/>
            <person name="Ng P."/>
            <person name="Nilsson R."/>
            <person name="Nishiguchi S."/>
            <person name="Nishikawa S."/>
            <person name="Nori F."/>
            <person name="Ohara O."/>
            <person name="Okazaki Y."/>
            <person name="Orlando V."/>
            <person name="Pang K.C."/>
            <person name="Pavan W.J."/>
            <person name="Pavesi G."/>
            <person name="Pesole G."/>
            <person name="Petrovsky N."/>
            <person name="Piazza S."/>
            <person name="Reed J."/>
            <person name="Reid J.F."/>
            <person name="Ring B.Z."/>
            <person name="Ringwald M."/>
            <person name="Rost B."/>
            <person name="Ruan Y."/>
            <person name="Salzberg S.L."/>
            <person name="Sandelin A."/>
            <person name="Schneider C."/>
            <person name="Schoenbach C."/>
            <person name="Sekiguchi K."/>
            <person name="Semple C.A."/>
            <person name="Seno S."/>
            <person name="Sessa L."/>
            <person name="Sheng Y."/>
            <person name="Shibata Y."/>
            <person name="Shimada H."/>
            <person name="Shimada K."/>
            <person name="Silva D."/>
            <person name="Sinclair B."/>
            <person name="Sperling S."/>
            <person name="Stupka E."/>
            <person name="Sugiura K."/>
            <person name="Sultana R."/>
            <person name="Takenaka Y."/>
            <person name="Taki K."/>
            <person name="Tammoja K."/>
            <person name="Tan S.L."/>
            <person name="Tang S."/>
            <person name="Taylor M.S."/>
            <person name="Tegner J."/>
            <person name="Teichmann S.A."/>
            <person name="Ueda H.R."/>
            <person name="van Nimwegen E."/>
            <person name="Verardo R."/>
            <person name="Wei C.L."/>
            <person name="Yagi K."/>
            <person name="Yamanishi H."/>
            <person name="Zabarovsky E."/>
            <person name="Zhu S."/>
            <person name="Zimmer A."/>
            <person name="Hide W."/>
            <person name="Bult C."/>
            <person name="Grimmond S.M."/>
            <person name="Teasdale R.D."/>
            <person name="Liu E.T."/>
            <person name="Brusic V."/>
            <person name="Quackenbush J."/>
            <person name="Wahlestedt C."/>
            <person name="Mattick J.S."/>
            <person name="Hume D.A."/>
            <person name="Kai C."/>
            <person name="Sasaki D."/>
            <person name="Tomaru Y."/>
            <person name="Fukuda S."/>
            <person name="Kanamori-Katayama M."/>
            <person name="Suzuki M."/>
            <person name="Aoki J."/>
            <person name="Arakawa T."/>
            <person name="Iida J."/>
            <person name="Imamura K."/>
            <person name="Itoh M."/>
            <person name="Kato T."/>
            <person name="Kawaji H."/>
            <person name="Kawagashira N."/>
            <person name="Kawashima T."/>
            <person name="Kojima M."/>
            <person name="Kondo S."/>
            <person name="Konno H."/>
            <person name="Nakano K."/>
            <person name="Ninomiya N."/>
            <person name="Nishio T."/>
            <person name="Okada M."/>
            <person name="Plessy C."/>
            <person name="Shibata K."/>
            <person name="Shiraki T."/>
            <person name="Suzuki S."/>
            <person name="Tagami M."/>
            <person name="Waki K."/>
            <person name="Watahiki A."/>
            <person name="Okamura-Oho Y."/>
            <person name="Suzuki H."/>
            <person name="Kawai J."/>
            <person name="Hayashizaki Y."/>
        </authorList>
    </citation>
    <scope>NUCLEOTIDE SEQUENCE [LARGE SCALE MRNA] (ISOFORMS 1 AND 2)</scope>
    <source>
        <strain>C57BL/6J</strain>
        <tissue>Cerebellum</tissue>
        <tissue>Embryo</tissue>
        <tissue>Thymus</tissue>
    </source>
</reference>
<reference key="2">
    <citation type="journal article" date="2004" name="Genome Res.">
        <title>The status, quality, and expansion of the NIH full-length cDNA project: the Mammalian Gene Collection (MGC).</title>
        <authorList>
            <consortium name="The MGC Project Team"/>
        </authorList>
    </citation>
    <scope>NUCLEOTIDE SEQUENCE [LARGE SCALE MRNA] (ISOFORM 1)</scope>
    <source>
        <strain>C57BL/6J</strain>
        <tissue>Brain</tissue>
        <tissue>Eye</tissue>
    </source>
</reference>
<reference key="3">
    <citation type="journal article" date="2010" name="EMBO Rep.">
        <title>TBCCD1, a new centrosomal protein, is required for centrosome and Golgi apparatus positioning.</title>
        <authorList>
            <person name="Goncalves J."/>
            <person name="Nolasco S."/>
            <person name="Nascimento R."/>
            <person name="Lopez Fanarraga M."/>
            <person name="Zabala J.C."/>
            <person name="Soares H."/>
        </authorList>
    </citation>
    <scope>TISSUE SPECIFICITY</scope>
</reference>
<feature type="chain" id="PRO_0000304945" description="TBCC domain-containing protein 1">
    <location>
        <begin position="1"/>
        <end position="552"/>
    </location>
</feature>
<feature type="domain" description="C-CAP/cofactor C-like" evidence="2">
    <location>
        <begin position="304"/>
        <end position="435"/>
    </location>
</feature>
<feature type="splice variant" id="VSP_028139" description="In isoform 2." evidence="4">
    <original>VE</original>
    <variation>GI</variation>
    <location>
        <begin position="287"/>
        <end position="288"/>
    </location>
</feature>
<feature type="splice variant" id="VSP_028140" description="In isoform 2." evidence="4">
    <location>
        <begin position="289"/>
        <end position="552"/>
    </location>
</feature>
<feature type="sequence conflict" description="In Ref. 1; BAC30476." evidence="5" ref="1">
    <original>VL</original>
    <variation>AS</variation>
    <location>
        <begin position="6"/>
        <end position="7"/>
    </location>
</feature>
<gene>
    <name type="primary">Tbccd1</name>
</gene>
<accession>Q640P7</accession>
<accession>Q68FM1</accession>
<accession>Q8CA17</accession>
<accession>Q9CYG4</accession>
<protein>
    <recommendedName>
        <fullName>TBCC domain-containing protein 1</fullName>
    </recommendedName>
</protein>
<dbReference type="EMBL" id="AK017705">
    <property type="protein sequence ID" value="BAB30885.1"/>
    <property type="molecule type" value="mRNA"/>
</dbReference>
<dbReference type="EMBL" id="AK039905">
    <property type="protein sequence ID" value="BAC30476.1"/>
    <property type="status" value="ALT_FRAME"/>
    <property type="molecule type" value="mRNA"/>
</dbReference>
<dbReference type="EMBL" id="AK043059">
    <property type="protein sequence ID" value="BAC31450.1"/>
    <property type="molecule type" value="mRNA"/>
</dbReference>
<dbReference type="EMBL" id="BC079629">
    <property type="protein sequence ID" value="AAH79629.1"/>
    <property type="molecule type" value="mRNA"/>
</dbReference>
<dbReference type="EMBL" id="BC082558">
    <property type="protein sequence ID" value="AAH82558.1"/>
    <property type="molecule type" value="mRNA"/>
</dbReference>
<dbReference type="CCDS" id="CCDS49798.1">
    <molecule id="Q640P7-1"/>
</dbReference>
<dbReference type="RefSeq" id="NP_001074837.1">
    <molecule id="Q640P7-1"/>
    <property type="nucleotide sequence ID" value="NM_001081368.2"/>
</dbReference>
<dbReference type="RefSeq" id="NP_001303675.1">
    <molecule id="Q640P7-1"/>
    <property type="nucleotide sequence ID" value="NM_001316746.1"/>
</dbReference>
<dbReference type="RefSeq" id="XP_006522630.1">
    <molecule id="Q640P7-1"/>
    <property type="nucleotide sequence ID" value="XM_006522567.5"/>
</dbReference>
<dbReference type="RefSeq" id="XP_006522631.1">
    <molecule id="Q640P7-1"/>
    <property type="nucleotide sequence ID" value="XM_006522568.4"/>
</dbReference>
<dbReference type="SMR" id="Q640P7"/>
<dbReference type="FunCoup" id="Q640P7">
    <property type="interactions" value="1025"/>
</dbReference>
<dbReference type="STRING" id="10090.ENSMUSP00000004576"/>
<dbReference type="GlyGen" id="Q640P7">
    <property type="glycosylation" value="1 site"/>
</dbReference>
<dbReference type="iPTMnet" id="Q640P7"/>
<dbReference type="PhosphoSitePlus" id="Q640P7"/>
<dbReference type="PaxDb" id="10090-ENSMUSP00000004576"/>
<dbReference type="ProteomicsDB" id="263134">
    <molecule id="Q640P7-1"/>
</dbReference>
<dbReference type="ProteomicsDB" id="263135">
    <molecule id="Q640P7-2"/>
</dbReference>
<dbReference type="Antibodypedia" id="46838">
    <property type="antibodies" value="76 antibodies from 16 providers"/>
</dbReference>
<dbReference type="Ensembl" id="ENSMUST00000004576.8">
    <molecule id="Q640P7-1"/>
    <property type="protein sequence ID" value="ENSMUSP00000004576.7"/>
    <property type="gene ID" value="ENSMUSG00000004462.8"/>
</dbReference>
<dbReference type="Ensembl" id="ENSMUST00000232075.2">
    <molecule id="Q640P7-1"/>
    <property type="protein sequence ID" value="ENSMUSP00000156210.2"/>
    <property type="gene ID" value="ENSMUSG00000004462.8"/>
</dbReference>
<dbReference type="GeneID" id="70573"/>
<dbReference type="KEGG" id="mmu:70573"/>
<dbReference type="UCSC" id="uc007ysk.1">
    <molecule id="Q640P7-1"/>
    <property type="organism name" value="mouse"/>
</dbReference>
<dbReference type="UCSC" id="uc007ysm.1">
    <molecule id="Q640P7-2"/>
    <property type="organism name" value="mouse"/>
</dbReference>
<dbReference type="AGR" id="MGI:1917823"/>
<dbReference type="CTD" id="55171"/>
<dbReference type="MGI" id="MGI:1917823">
    <property type="gene designation" value="Tbccd1"/>
</dbReference>
<dbReference type="VEuPathDB" id="HostDB:ENSMUSG00000004462"/>
<dbReference type="eggNOG" id="KOG4416">
    <property type="taxonomic scope" value="Eukaryota"/>
</dbReference>
<dbReference type="GeneTree" id="ENSGT00470000042284"/>
<dbReference type="HOGENOM" id="CLU_016712_1_1_1"/>
<dbReference type="InParanoid" id="Q640P7"/>
<dbReference type="OMA" id="VPNAWDQ"/>
<dbReference type="OrthoDB" id="427777at2759"/>
<dbReference type="PhylomeDB" id="Q640P7"/>
<dbReference type="TreeFam" id="TF329418"/>
<dbReference type="BioGRID-ORCS" id="70573">
    <property type="hits" value="0 hits in 75 CRISPR screens"/>
</dbReference>
<dbReference type="ChiTaRS" id="Tbccd1">
    <property type="organism name" value="mouse"/>
</dbReference>
<dbReference type="PRO" id="PR:Q640P7"/>
<dbReference type="Proteomes" id="UP000000589">
    <property type="component" value="Chromosome 16"/>
</dbReference>
<dbReference type="RNAct" id="Q640P7">
    <property type="molecule type" value="protein"/>
</dbReference>
<dbReference type="Bgee" id="ENSMUSG00000004462">
    <property type="expression patterns" value="Expressed in spermatocyte and 229 other cell types or tissues"/>
</dbReference>
<dbReference type="ExpressionAtlas" id="Q640P7">
    <property type="expression patterns" value="baseline and differential"/>
</dbReference>
<dbReference type="GO" id="GO:0005737">
    <property type="term" value="C:cytoplasm"/>
    <property type="evidence" value="ECO:0007669"/>
    <property type="project" value="UniProtKB-KW"/>
</dbReference>
<dbReference type="GO" id="GO:0031616">
    <property type="term" value="C:spindle pole centrosome"/>
    <property type="evidence" value="ECO:0000250"/>
    <property type="project" value="UniProtKB"/>
</dbReference>
<dbReference type="GO" id="GO:0051661">
    <property type="term" value="P:maintenance of centrosome location"/>
    <property type="evidence" value="ECO:0000250"/>
    <property type="project" value="UniProtKB"/>
</dbReference>
<dbReference type="GO" id="GO:0051684">
    <property type="term" value="P:maintenance of Golgi location"/>
    <property type="evidence" value="ECO:0000250"/>
    <property type="project" value="UniProtKB"/>
</dbReference>
<dbReference type="GO" id="GO:0030334">
    <property type="term" value="P:regulation of cell migration"/>
    <property type="evidence" value="ECO:0000250"/>
    <property type="project" value="UniProtKB"/>
</dbReference>
<dbReference type="GO" id="GO:0008360">
    <property type="term" value="P:regulation of cell shape"/>
    <property type="evidence" value="ECO:0000250"/>
    <property type="project" value="UniProtKB"/>
</dbReference>
<dbReference type="FunFam" id="2.160.20.70:FF:000005">
    <property type="entry name" value="TBCC domain-containing protein 1"/>
    <property type="match status" value="1"/>
</dbReference>
<dbReference type="Gene3D" id="2.160.20.70">
    <property type="match status" value="1"/>
</dbReference>
<dbReference type="InterPro" id="IPR017901">
    <property type="entry name" value="C-CAP_CF_C-like"/>
</dbReference>
<dbReference type="InterPro" id="IPR016098">
    <property type="entry name" value="CAP/MinC_C"/>
</dbReference>
<dbReference type="InterPro" id="IPR036223">
    <property type="entry name" value="CAP_C_sf"/>
</dbReference>
<dbReference type="InterPro" id="IPR006599">
    <property type="entry name" value="CARP_motif"/>
</dbReference>
<dbReference type="InterPro" id="IPR039589">
    <property type="entry name" value="TBCC1"/>
</dbReference>
<dbReference type="InterPro" id="IPR012945">
    <property type="entry name" value="Tubulin-bd_cofactor_C_dom"/>
</dbReference>
<dbReference type="PANTHER" id="PTHR16052">
    <property type="entry name" value="TBCC DOMAIN-CONTAINING PROTEIN 1"/>
    <property type="match status" value="1"/>
</dbReference>
<dbReference type="PANTHER" id="PTHR16052:SF0">
    <property type="entry name" value="TBCC DOMAIN-CONTAINING PROTEIN 1"/>
    <property type="match status" value="1"/>
</dbReference>
<dbReference type="Pfam" id="PF07986">
    <property type="entry name" value="TBCC"/>
    <property type="match status" value="1"/>
</dbReference>
<dbReference type="SMART" id="SM00673">
    <property type="entry name" value="CARP"/>
    <property type="match status" value="2"/>
</dbReference>
<dbReference type="SUPFAM" id="SSF69340">
    <property type="entry name" value="C-terminal domain of adenylylcyclase associated protein"/>
    <property type="match status" value="1"/>
</dbReference>
<dbReference type="PROSITE" id="PS51329">
    <property type="entry name" value="C_CAP_COFACTOR_C"/>
    <property type="match status" value="1"/>
</dbReference>
<organism>
    <name type="scientific">Mus musculus</name>
    <name type="common">Mouse</name>
    <dbReference type="NCBI Taxonomy" id="10090"/>
    <lineage>
        <taxon>Eukaryota</taxon>
        <taxon>Metazoa</taxon>
        <taxon>Chordata</taxon>
        <taxon>Craniata</taxon>
        <taxon>Vertebrata</taxon>
        <taxon>Euteleostomi</taxon>
        <taxon>Mammalia</taxon>
        <taxon>Eutheria</taxon>
        <taxon>Euarchontoglires</taxon>
        <taxon>Glires</taxon>
        <taxon>Rodentia</taxon>
        <taxon>Myomorpha</taxon>
        <taxon>Muroidea</taxon>
        <taxon>Muridae</taxon>
        <taxon>Murinae</taxon>
        <taxon>Mus</taxon>
        <taxon>Mus</taxon>
    </lineage>
</organism>
<sequence length="552" mass="62848">MDQSGVLLWVKAEPFLVGALQEPPPSKFSLHYLRKIATYVRTRATEGAYPHLYWPTWRHIACGKLQLAKDLAWLYFEMFDNLSVRTPEERLEWSEILSNCATEEEVEKQRSQLYVDTLQFLLFLYIQQLNRISLRTSLIGEEWPSRRSRPQSPSPAERPSCHNKNWNDYSHQAFVCNHLSELLELLLDPEQLTASFHSTHSSLLSRDAVTALSFLIEGTVSRAKKVYPLHQLALWQPLHVASGFSKSSKTFSLYKLEAWLRASLTTNPFGPSACLKSGKKLAWAHQVEGSTKRAKIACNAHMAPRLHRIVVMSQVYKQTLAKSSETLVGAHVRAHRCSESFIYLLSPLRSMTIEKCRNSTFVLGPVETTLHLHDCENLKVIAVCHRLSISSTTSCTFHIMTPSRPLILSGNQTVTFAPFHTHYPMLEDHMARTGLATVPNYWDNPMVVCKEGSVTSLFRLLPPSEFYIFVIPFEMEGDTAEIPGGLPSAYQKALAQREESIHIWQKTVKEARLTKEQRKQFQALVENKFYEWLVSTGHRQQLDSLVPTPAAS</sequence>
<evidence type="ECO:0000250" key="1"/>
<evidence type="ECO:0000255" key="2">
    <source>
        <dbReference type="PROSITE-ProRule" id="PRU00659"/>
    </source>
</evidence>
<evidence type="ECO:0000269" key="3">
    <source>
    </source>
</evidence>
<evidence type="ECO:0000303" key="4">
    <source>
    </source>
</evidence>
<evidence type="ECO:0000305" key="5"/>
<keyword id="KW-0025">Alternative splicing</keyword>
<keyword id="KW-0963">Cytoplasm</keyword>
<keyword id="KW-0206">Cytoskeleton</keyword>
<keyword id="KW-1185">Reference proteome</keyword>
<proteinExistence type="evidence at protein level"/>
<name>TBCC1_MOUSE</name>